<gene>
    <name evidence="1" type="primary">rplW</name>
    <name type="ordered locus">CLD_1026</name>
</gene>
<comment type="function">
    <text evidence="1">One of the early assembly proteins it binds 23S rRNA. One of the proteins that surrounds the polypeptide exit tunnel on the outside of the ribosome. Forms the main docking site for trigger factor binding to the ribosome.</text>
</comment>
<comment type="subunit">
    <text evidence="1">Part of the 50S ribosomal subunit. Contacts protein L29, and trigger factor when it is bound to the ribosome.</text>
</comment>
<comment type="similarity">
    <text evidence="1">Belongs to the universal ribosomal protein uL23 family.</text>
</comment>
<feature type="chain" id="PRO_1000144556" description="Large ribosomal subunit protein uL23">
    <location>
        <begin position="1"/>
        <end position="97"/>
    </location>
</feature>
<name>RL23_CLOBK</name>
<proteinExistence type="inferred from homology"/>
<organism>
    <name type="scientific">Clostridium botulinum (strain Okra / Type B1)</name>
    <dbReference type="NCBI Taxonomy" id="498213"/>
    <lineage>
        <taxon>Bacteria</taxon>
        <taxon>Bacillati</taxon>
        <taxon>Bacillota</taxon>
        <taxon>Clostridia</taxon>
        <taxon>Eubacteriales</taxon>
        <taxon>Clostridiaceae</taxon>
        <taxon>Clostridium</taxon>
    </lineage>
</organism>
<reference key="1">
    <citation type="journal article" date="2007" name="PLoS ONE">
        <title>Analysis of the neurotoxin complex genes in Clostridium botulinum A1-A4 and B1 strains: BoNT/A3, /Ba4 and /B1 clusters are located within plasmids.</title>
        <authorList>
            <person name="Smith T.J."/>
            <person name="Hill K.K."/>
            <person name="Foley B.T."/>
            <person name="Detter J.C."/>
            <person name="Munk A.C."/>
            <person name="Bruce D.C."/>
            <person name="Doggett N.A."/>
            <person name="Smith L.A."/>
            <person name="Marks J.D."/>
            <person name="Xie G."/>
            <person name="Brettin T.S."/>
        </authorList>
    </citation>
    <scope>NUCLEOTIDE SEQUENCE [LARGE SCALE GENOMIC DNA]</scope>
    <source>
        <strain>Okra / Type B1</strain>
    </source>
</reference>
<sequence length="97" mass="11160">MKLTNYDIIRRPLITEKTMASMADKKYTFVVDIHANKSQIKNAIETIFDVKVEDVKTARIMGKTKRVGVHIGKRPDYKKAIVKLTEDSKTIEFFEGL</sequence>
<protein>
    <recommendedName>
        <fullName evidence="1">Large ribosomal subunit protein uL23</fullName>
    </recommendedName>
    <alternativeName>
        <fullName evidence="2">50S ribosomal protein L23</fullName>
    </alternativeName>
</protein>
<keyword id="KW-0687">Ribonucleoprotein</keyword>
<keyword id="KW-0689">Ribosomal protein</keyword>
<keyword id="KW-0694">RNA-binding</keyword>
<keyword id="KW-0699">rRNA-binding</keyword>
<evidence type="ECO:0000255" key="1">
    <source>
        <dbReference type="HAMAP-Rule" id="MF_01369"/>
    </source>
</evidence>
<evidence type="ECO:0000305" key="2"/>
<accession>B1IGF2</accession>
<dbReference type="EMBL" id="CP000939">
    <property type="protein sequence ID" value="ACA45669.1"/>
    <property type="molecule type" value="Genomic_DNA"/>
</dbReference>
<dbReference type="RefSeq" id="WP_003357444.1">
    <property type="nucleotide sequence ID" value="NC_010516.1"/>
</dbReference>
<dbReference type="SMR" id="B1IGF2"/>
<dbReference type="GeneID" id="92940248"/>
<dbReference type="KEGG" id="cbb:CLD_1026"/>
<dbReference type="HOGENOM" id="CLU_037562_3_2_9"/>
<dbReference type="Proteomes" id="UP000008541">
    <property type="component" value="Chromosome"/>
</dbReference>
<dbReference type="GO" id="GO:1990904">
    <property type="term" value="C:ribonucleoprotein complex"/>
    <property type="evidence" value="ECO:0007669"/>
    <property type="project" value="UniProtKB-KW"/>
</dbReference>
<dbReference type="GO" id="GO:0005840">
    <property type="term" value="C:ribosome"/>
    <property type="evidence" value="ECO:0007669"/>
    <property type="project" value="UniProtKB-KW"/>
</dbReference>
<dbReference type="GO" id="GO:0019843">
    <property type="term" value="F:rRNA binding"/>
    <property type="evidence" value="ECO:0007669"/>
    <property type="project" value="UniProtKB-UniRule"/>
</dbReference>
<dbReference type="GO" id="GO:0003735">
    <property type="term" value="F:structural constituent of ribosome"/>
    <property type="evidence" value="ECO:0007669"/>
    <property type="project" value="InterPro"/>
</dbReference>
<dbReference type="GO" id="GO:0006412">
    <property type="term" value="P:translation"/>
    <property type="evidence" value="ECO:0007669"/>
    <property type="project" value="UniProtKB-UniRule"/>
</dbReference>
<dbReference type="FunFam" id="3.30.70.330:FF:000001">
    <property type="entry name" value="50S ribosomal protein L23"/>
    <property type="match status" value="1"/>
</dbReference>
<dbReference type="Gene3D" id="3.30.70.330">
    <property type="match status" value="1"/>
</dbReference>
<dbReference type="HAMAP" id="MF_01369_B">
    <property type="entry name" value="Ribosomal_uL23_B"/>
    <property type="match status" value="1"/>
</dbReference>
<dbReference type="InterPro" id="IPR012677">
    <property type="entry name" value="Nucleotide-bd_a/b_plait_sf"/>
</dbReference>
<dbReference type="InterPro" id="IPR013025">
    <property type="entry name" value="Ribosomal_uL23-like"/>
</dbReference>
<dbReference type="InterPro" id="IPR012678">
    <property type="entry name" value="Ribosomal_uL23/eL15/eS24_sf"/>
</dbReference>
<dbReference type="InterPro" id="IPR001014">
    <property type="entry name" value="Ribosomal_uL23_CS"/>
</dbReference>
<dbReference type="NCBIfam" id="NF004363">
    <property type="entry name" value="PRK05738.2-4"/>
    <property type="match status" value="1"/>
</dbReference>
<dbReference type="PANTHER" id="PTHR11620">
    <property type="entry name" value="60S RIBOSOMAL PROTEIN L23A"/>
    <property type="match status" value="1"/>
</dbReference>
<dbReference type="Pfam" id="PF00276">
    <property type="entry name" value="Ribosomal_L23"/>
    <property type="match status" value="1"/>
</dbReference>
<dbReference type="SUPFAM" id="SSF54189">
    <property type="entry name" value="Ribosomal proteins S24e, L23 and L15e"/>
    <property type="match status" value="1"/>
</dbReference>
<dbReference type="PROSITE" id="PS00050">
    <property type="entry name" value="RIBOSOMAL_L23"/>
    <property type="match status" value="1"/>
</dbReference>